<organism>
    <name type="scientific">Caenorhabditis elegans</name>
    <dbReference type="NCBI Taxonomy" id="6239"/>
    <lineage>
        <taxon>Eukaryota</taxon>
        <taxon>Metazoa</taxon>
        <taxon>Ecdysozoa</taxon>
        <taxon>Nematoda</taxon>
        <taxon>Chromadorea</taxon>
        <taxon>Rhabditida</taxon>
        <taxon>Rhabditina</taxon>
        <taxon>Rhabditomorpha</taxon>
        <taxon>Rhabditoidea</taxon>
        <taxon>Rhabditidae</taxon>
        <taxon>Peloderinae</taxon>
        <taxon>Caenorhabditis</taxon>
    </lineage>
</organism>
<accession>Q10123</accession>
<proteinExistence type="predicted"/>
<name>YSM3_CAEEL</name>
<keyword id="KW-1185">Reference proteome</keyword>
<feature type="chain" id="PRO_0000065356" description="Uncharacterized protein F52C9.3">
    <location>
        <begin position="1"/>
        <end position="439"/>
    </location>
</feature>
<feature type="domain" description="DAGKc" evidence="1">
    <location>
        <begin position="65"/>
        <end position="208"/>
    </location>
</feature>
<protein>
    <recommendedName>
        <fullName>Uncharacterized protein F52C9.3</fullName>
    </recommendedName>
</protein>
<evidence type="ECO:0000255" key="1">
    <source>
        <dbReference type="PROSITE-ProRule" id="PRU00783"/>
    </source>
</evidence>
<sequence length="439" mass="49974">MSKIIGKIGRLPKTLYEHKKKTIFFSFLGYLGADWVYRWDRNQGIRKEYAKIAVKYGETTVSPETRPKRVFVLVNVEGNSRGCFDQFNKNALPLFHLAGVQVDVVKADNQAQLEALAGAVDTQEADILYVVGGDGTIGTVVTGIFRNREKAQLPVGFYPGGYDNLWLKRMLPSVFENSDDVRHACETAMAVIEDQKKSVYAFELTTEGSTLAPEYGLGDVSAGWFRQIEDTRKKFWYFSMAKRRWAYFWEMLKRGPAPIECHVEYEETCAGCEKCRPKPIIEAPQWRWWHVLTGTPKYKNNDGQKDYTGIINEKCGEKHELDTHGAEFLIENEQMSDYSQIRFRMGGTDIGRFGVISDGFKRCSEGIVGRSTDEKFYGTDFLANSVAFKISALPSYIHRLYISSNATPKDAELTDRQITIRGTQKKLDIFLPTSIRLEL</sequence>
<dbReference type="EMBL" id="FO081435">
    <property type="protein sequence ID" value="CCD71607.1"/>
    <property type="molecule type" value="Genomic_DNA"/>
</dbReference>
<dbReference type="PIR" id="T16422">
    <property type="entry name" value="T16422"/>
</dbReference>
<dbReference type="RefSeq" id="NP_498138.2">
    <property type="nucleotide sequence ID" value="NM_065737.4"/>
</dbReference>
<dbReference type="SMR" id="Q10123"/>
<dbReference type="BioGRID" id="40963">
    <property type="interactions" value="4"/>
</dbReference>
<dbReference type="FunCoup" id="Q10123">
    <property type="interactions" value="2169"/>
</dbReference>
<dbReference type="STRING" id="6239.F52C9.3.1"/>
<dbReference type="PaxDb" id="6239-F52C9.3"/>
<dbReference type="PeptideAtlas" id="Q10123"/>
<dbReference type="EnsemblMetazoa" id="F52C9.3.1">
    <property type="protein sequence ID" value="F52C9.3.1"/>
    <property type="gene ID" value="WBGene00018674"/>
</dbReference>
<dbReference type="GeneID" id="175732"/>
<dbReference type="KEGG" id="cel:CELE_F52C9.3"/>
<dbReference type="UCSC" id="F52C9.3">
    <property type="organism name" value="c. elegans"/>
</dbReference>
<dbReference type="AGR" id="WB:WBGene00018674"/>
<dbReference type="CTD" id="175732"/>
<dbReference type="WormBase" id="F52C9.3">
    <property type="protein sequence ID" value="CE29806"/>
    <property type="gene ID" value="WBGene00018674"/>
</dbReference>
<dbReference type="eggNOG" id="KOG4435">
    <property type="taxonomic scope" value="Eukaryota"/>
</dbReference>
<dbReference type="GeneTree" id="ENSGT00940000154961"/>
<dbReference type="HOGENOM" id="CLU_682532_0_0_1"/>
<dbReference type="InParanoid" id="Q10123"/>
<dbReference type="OMA" id="VEYEETC"/>
<dbReference type="OrthoDB" id="9979394at2759"/>
<dbReference type="PhylomeDB" id="Q10123"/>
<dbReference type="Reactome" id="R-CEL-1483206">
    <property type="pathway name" value="Glycerophospholipid biosynthesis"/>
</dbReference>
<dbReference type="PRO" id="PR:Q10123"/>
<dbReference type="Proteomes" id="UP000001940">
    <property type="component" value="Chromosome III"/>
</dbReference>
<dbReference type="Bgee" id="WBGene00018674">
    <property type="expression patterns" value="Expressed in germ line (C elegans) and 4 other cell types or tissues"/>
</dbReference>
<dbReference type="GO" id="GO:0005737">
    <property type="term" value="C:cytoplasm"/>
    <property type="evidence" value="ECO:0000318"/>
    <property type="project" value="GO_Central"/>
</dbReference>
<dbReference type="GO" id="GO:0016020">
    <property type="term" value="C:membrane"/>
    <property type="evidence" value="ECO:0000318"/>
    <property type="project" value="GO_Central"/>
</dbReference>
<dbReference type="GO" id="GO:0005739">
    <property type="term" value="C:mitochondrion"/>
    <property type="evidence" value="ECO:0000318"/>
    <property type="project" value="GO_Central"/>
</dbReference>
<dbReference type="GO" id="GO:0047620">
    <property type="term" value="F:acylglycerol kinase activity"/>
    <property type="evidence" value="ECO:0000318"/>
    <property type="project" value="GO_Central"/>
</dbReference>
<dbReference type="GO" id="GO:0004143">
    <property type="term" value="F:ATP-dependent diacylglycerol kinase activity"/>
    <property type="evidence" value="ECO:0000318"/>
    <property type="project" value="GO_Central"/>
</dbReference>
<dbReference type="GO" id="GO:0001729">
    <property type="term" value="F:ceramide kinase activity"/>
    <property type="evidence" value="ECO:0000318"/>
    <property type="project" value="GO_Central"/>
</dbReference>
<dbReference type="GO" id="GO:0017050">
    <property type="term" value="F:D-erythro-sphingosine kinase activity"/>
    <property type="evidence" value="ECO:0000318"/>
    <property type="project" value="GO_Central"/>
</dbReference>
<dbReference type="GO" id="GO:0046513">
    <property type="term" value="P:ceramide biosynthetic process"/>
    <property type="evidence" value="ECO:0000318"/>
    <property type="project" value="GO_Central"/>
</dbReference>
<dbReference type="GO" id="GO:0046512">
    <property type="term" value="P:sphingosine biosynthetic process"/>
    <property type="evidence" value="ECO:0000318"/>
    <property type="project" value="GO_Central"/>
</dbReference>
<dbReference type="Gene3D" id="3.40.50.10330">
    <property type="entry name" value="Probable inorganic polyphosphate/atp-NAD kinase, domain 1"/>
    <property type="match status" value="1"/>
</dbReference>
<dbReference type="InterPro" id="IPR017438">
    <property type="entry name" value="ATP-NAD_kinase_N"/>
</dbReference>
<dbReference type="InterPro" id="IPR001206">
    <property type="entry name" value="Diacylglycerol_kinase_cat_dom"/>
</dbReference>
<dbReference type="InterPro" id="IPR050187">
    <property type="entry name" value="Lipid_Phosphate_FormReg"/>
</dbReference>
<dbReference type="InterPro" id="IPR016064">
    <property type="entry name" value="NAD/diacylglycerol_kinase_sf"/>
</dbReference>
<dbReference type="PANTHER" id="PTHR12358:SF31">
    <property type="entry name" value="ACYLGLYCEROL KINASE, MITOCHONDRIAL"/>
    <property type="match status" value="1"/>
</dbReference>
<dbReference type="PANTHER" id="PTHR12358">
    <property type="entry name" value="SPHINGOSINE KINASE"/>
    <property type="match status" value="1"/>
</dbReference>
<dbReference type="Pfam" id="PF00781">
    <property type="entry name" value="DAGK_cat"/>
    <property type="match status" value="1"/>
</dbReference>
<dbReference type="SUPFAM" id="SSF111331">
    <property type="entry name" value="NAD kinase/diacylglycerol kinase-like"/>
    <property type="match status" value="1"/>
</dbReference>
<dbReference type="PROSITE" id="PS50146">
    <property type="entry name" value="DAGK"/>
    <property type="match status" value="1"/>
</dbReference>
<gene>
    <name type="ORF">F52C9.3</name>
</gene>
<reference key="1">
    <citation type="journal article" date="1998" name="Science">
        <title>Genome sequence of the nematode C. elegans: a platform for investigating biology.</title>
        <authorList>
            <consortium name="The C. elegans sequencing consortium"/>
        </authorList>
    </citation>
    <scope>NUCLEOTIDE SEQUENCE [LARGE SCALE GENOMIC DNA]</scope>
    <source>
        <strain>Bristol N2</strain>
    </source>
</reference>